<name>GRPE_BORBR</name>
<reference key="1">
    <citation type="journal article" date="2003" name="Nat. Genet.">
        <title>Comparative analysis of the genome sequences of Bordetella pertussis, Bordetella parapertussis and Bordetella bronchiseptica.</title>
        <authorList>
            <person name="Parkhill J."/>
            <person name="Sebaihia M."/>
            <person name="Preston A."/>
            <person name="Murphy L.D."/>
            <person name="Thomson N.R."/>
            <person name="Harris D.E."/>
            <person name="Holden M.T.G."/>
            <person name="Churcher C.M."/>
            <person name="Bentley S.D."/>
            <person name="Mungall K.L."/>
            <person name="Cerdeno-Tarraga A.-M."/>
            <person name="Temple L."/>
            <person name="James K.D."/>
            <person name="Harris B."/>
            <person name="Quail M.A."/>
            <person name="Achtman M."/>
            <person name="Atkin R."/>
            <person name="Baker S."/>
            <person name="Basham D."/>
            <person name="Bason N."/>
            <person name="Cherevach I."/>
            <person name="Chillingworth T."/>
            <person name="Collins M."/>
            <person name="Cronin A."/>
            <person name="Davis P."/>
            <person name="Doggett J."/>
            <person name="Feltwell T."/>
            <person name="Goble A."/>
            <person name="Hamlin N."/>
            <person name="Hauser H."/>
            <person name="Holroyd S."/>
            <person name="Jagels K."/>
            <person name="Leather S."/>
            <person name="Moule S."/>
            <person name="Norberczak H."/>
            <person name="O'Neil S."/>
            <person name="Ormond D."/>
            <person name="Price C."/>
            <person name="Rabbinowitsch E."/>
            <person name="Rutter S."/>
            <person name="Sanders M."/>
            <person name="Saunders D."/>
            <person name="Seeger K."/>
            <person name="Sharp S."/>
            <person name="Simmonds M."/>
            <person name="Skelton J."/>
            <person name="Squares R."/>
            <person name="Squares S."/>
            <person name="Stevens K."/>
            <person name="Unwin L."/>
            <person name="Whitehead S."/>
            <person name="Barrell B.G."/>
            <person name="Maskell D.J."/>
        </authorList>
    </citation>
    <scope>NUCLEOTIDE SEQUENCE [LARGE SCALE GENOMIC DNA]</scope>
    <source>
        <strain>ATCC BAA-588 / NCTC 13252 / RB50</strain>
    </source>
</reference>
<gene>
    <name evidence="1" type="primary">grpE</name>
    <name type="ordered locus">BB3936</name>
</gene>
<evidence type="ECO:0000255" key="1">
    <source>
        <dbReference type="HAMAP-Rule" id="MF_01151"/>
    </source>
</evidence>
<evidence type="ECO:0000256" key="2">
    <source>
        <dbReference type="SAM" id="MobiDB-lite"/>
    </source>
</evidence>
<dbReference type="EMBL" id="BX640449">
    <property type="protein sequence ID" value="CAE34299.1"/>
    <property type="molecule type" value="Genomic_DNA"/>
</dbReference>
<dbReference type="RefSeq" id="WP_003814083.1">
    <property type="nucleotide sequence ID" value="NC_002927.3"/>
</dbReference>
<dbReference type="SMR" id="Q7WGI2"/>
<dbReference type="GeneID" id="93205273"/>
<dbReference type="KEGG" id="bbr:BB3936"/>
<dbReference type="eggNOG" id="COG0576">
    <property type="taxonomic scope" value="Bacteria"/>
</dbReference>
<dbReference type="HOGENOM" id="CLU_057217_6_1_4"/>
<dbReference type="Proteomes" id="UP000001027">
    <property type="component" value="Chromosome"/>
</dbReference>
<dbReference type="GO" id="GO:0005829">
    <property type="term" value="C:cytosol"/>
    <property type="evidence" value="ECO:0007669"/>
    <property type="project" value="TreeGrafter"/>
</dbReference>
<dbReference type="GO" id="GO:0000774">
    <property type="term" value="F:adenyl-nucleotide exchange factor activity"/>
    <property type="evidence" value="ECO:0007669"/>
    <property type="project" value="InterPro"/>
</dbReference>
<dbReference type="GO" id="GO:0042803">
    <property type="term" value="F:protein homodimerization activity"/>
    <property type="evidence" value="ECO:0007669"/>
    <property type="project" value="InterPro"/>
</dbReference>
<dbReference type="GO" id="GO:0051087">
    <property type="term" value="F:protein-folding chaperone binding"/>
    <property type="evidence" value="ECO:0007669"/>
    <property type="project" value="InterPro"/>
</dbReference>
<dbReference type="GO" id="GO:0051082">
    <property type="term" value="F:unfolded protein binding"/>
    <property type="evidence" value="ECO:0007669"/>
    <property type="project" value="TreeGrafter"/>
</dbReference>
<dbReference type="GO" id="GO:0006457">
    <property type="term" value="P:protein folding"/>
    <property type="evidence" value="ECO:0007669"/>
    <property type="project" value="InterPro"/>
</dbReference>
<dbReference type="CDD" id="cd00446">
    <property type="entry name" value="GrpE"/>
    <property type="match status" value="1"/>
</dbReference>
<dbReference type="Gene3D" id="3.90.20.20">
    <property type="match status" value="1"/>
</dbReference>
<dbReference type="Gene3D" id="2.30.22.10">
    <property type="entry name" value="Head domain of nucleotide exchange factor GrpE"/>
    <property type="match status" value="1"/>
</dbReference>
<dbReference type="HAMAP" id="MF_01151">
    <property type="entry name" value="GrpE"/>
    <property type="match status" value="1"/>
</dbReference>
<dbReference type="InterPro" id="IPR000740">
    <property type="entry name" value="GrpE"/>
</dbReference>
<dbReference type="InterPro" id="IPR013805">
    <property type="entry name" value="GrpE_coiled_coil"/>
</dbReference>
<dbReference type="InterPro" id="IPR009012">
    <property type="entry name" value="GrpE_head"/>
</dbReference>
<dbReference type="NCBIfam" id="NF010737">
    <property type="entry name" value="PRK14139.1"/>
    <property type="match status" value="1"/>
</dbReference>
<dbReference type="NCBIfam" id="NF010748">
    <property type="entry name" value="PRK14150.1"/>
    <property type="match status" value="1"/>
</dbReference>
<dbReference type="PANTHER" id="PTHR21237">
    <property type="entry name" value="GRPE PROTEIN"/>
    <property type="match status" value="1"/>
</dbReference>
<dbReference type="PANTHER" id="PTHR21237:SF23">
    <property type="entry name" value="GRPE PROTEIN HOMOLOG, MITOCHONDRIAL"/>
    <property type="match status" value="1"/>
</dbReference>
<dbReference type="Pfam" id="PF01025">
    <property type="entry name" value="GrpE"/>
    <property type="match status" value="1"/>
</dbReference>
<dbReference type="PRINTS" id="PR00773">
    <property type="entry name" value="GRPEPROTEIN"/>
</dbReference>
<dbReference type="SUPFAM" id="SSF58014">
    <property type="entry name" value="Coiled-coil domain of nucleotide exchange factor GrpE"/>
    <property type="match status" value="1"/>
</dbReference>
<dbReference type="SUPFAM" id="SSF51064">
    <property type="entry name" value="Head domain of nucleotide exchange factor GrpE"/>
    <property type="match status" value="1"/>
</dbReference>
<dbReference type="PROSITE" id="PS01071">
    <property type="entry name" value="GRPE"/>
    <property type="match status" value="1"/>
</dbReference>
<feature type="chain" id="PRO_0000113749" description="Protein GrpE">
    <location>
        <begin position="1"/>
        <end position="184"/>
    </location>
</feature>
<feature type="region of interest" description="Disordered" evidence="2">
    <location>
        <begin position="1"/>
        <end position="26"/>
    </location>
</feature>
<sequence>MTAPQEPVDSTPESGENAATPGLEDDLSAELAALRAELEAAQATVKAQQEQVLRAAAEAENVRRRAQEDVAKARKFGIESFAESLVPVKDSLEAALAQPDQAAQAWREGVEVTLKQLTAAFERNLLKEIAPAQGDKFDPHLHQAISSVPADQPANTVLQLLQKGYVIADRTLRPALVVVSAGQG</sequence>
<organism>
    <name type="scientific">Bordetella bronchiseptica (strain ATCC BAA-588 / NCTC 13252 / RB50)</name>
    <name type="common">Alcaligenes bronchisepticus</name>
    <dbReference type="NCBI Taxonomy" id="257310"/>
    <lineage>
        <taxon>Bacteria</taxon>
        <taxon>Pseudomonadati</taxon>
        <taxon>Pseudomonadota</taxon>
        <taxon>Betaproteobacteria</taxon>
        <taxon>Burkholderiales</taxon>
        <taxon>Alcaligenaceae</taxon>
        <taxon>Bordetella</taxon>
    </lineage>
</organism>
<proteinExistence type="inferred from homology"/>
<comment type="function">
    <text evidence="1">Participates actively in the response to hyperosmotic and heat shock by preventing the aggregation of stress-denatured proteins, in association with DnaK and GrpE. It is the nucleotide exchange factor for DnaK and may function as a thermosensor. Unfolded proteins bind initially to DnaJ; upon interaction with the DnaJ-bound protein, DnaK hydrolyzes its bound ATP, resulting in the formation of a stable complex. GrpE releases ADP from DnaK; ATP binding to DnaK triggers the release of the substrate protein, thus completing the reaction cycle. Several rounds of ATP-dependent interactions between DnaJ, DnaK and GrpE are required for fully efficient folding.</text>
</comment>
<comment type="subunit">
    <text evidence="1">Homodimer.</text>
</comment>
<comment type="subcellular location">
    <subcellularLocation>
        <location evidence="1">Cytoplasm</location>
    </subcellularLocation>
</comment>
<comment type="similarity">
    <text evidence="1">Belongs to the GrpE family.</text>
</comment>
<keyword id="KW-0143">Chaperone</keyword>
<keyword id="KW-0963">Cytoplasm</keyword>
<keyword id="KW-0346">Stress response</keyword>
<accession>Q7WGI2</accession>
<protein>
    <recommendedName>
        <fullName evidence="1">Protein GrpE</fullName>
    </recommendedName>
    <alternativeName>
        <fullName evidence="1">HSP-70 cofactor</fullName>
    </alternativeName>
</protein>